<dbReference type="EC" id="3.1.-.-" evidence="1"/>
<dbReference type="EMBL" id="AE001437">
    <property type="protein sequence ID" value="AAK80220.1"/>
    <property type="molecule type" value="Genomic_DNA"/>
</dbReference>
<dbReference type="PIR" id="A97179">
    <property type="entry name" value="A97179"/>
</dbReference>
<dbReference type="RefSeq" id="NP_348880.1">
    <property type="nucleotide sequence ID" value="NC_003030.1"/>
</dbReference>
<dbReference type="RefSeq" id="WP_010965561.1">
    <property type="nucleotide sequence ID" value="NC_003030.1"/>
</dbReference>
<dbReference type="SMR" id="Q97GV2"/>
<dbReference type="STRING" id="272562.CA_C2263"/>
<dbReference type="GeneID" id="44998741"/>
<dbReference type="KEGG" id="cac:CA_C2263"/>
<dbReference type="PATRIC" id="fig|272562.8.peg.2463"/>
<dbReference type="eggNOG" id="COG3857">
    <property type="taxonomic scope" value="Bacteria"/>
</dbReference>
<dbReference type="HOGENOM" id="CLU_007838_0_0_9"/>
<dbReference type="OrthoDB" id="9758506at2"/>
<dbReference type="Proteomes" id="UP000000814">
    <property type="component" value="Chromosome"/>
</dbReference>
<dbReference type="GO" id="GO:0051539">
    <property type="term" value="F:4 iron, 4 sulfur cluster binding"/>
    <property type="evidence" value="ECO:0007669"/>
    <property type="project" value="UniProtKB-KW"/>
</dbReference>
<dbReference type="GO" id="GO:0008409">
    <property type="term" value="F:5'-3' exonuclease activity"/>
    <property type="evidence" value="ECO:0007669"/>
    <property type="project" value="UniProtKB-UniRule"/>
</dbReference>
<dbReference type="GO" id="GO:0005524">
    <property type="term" value="F:ATP binding"/>
    <property type="evidence" value="ECO:0007669"/>
    <property type="project" value="UniProtKB-UniRule"/>
</dbReference>
<dbReference type="GO" id="GO:0003690">
    <property type="term" value="F:double-stranded DNA binding"/>
    <property type="evidence" value="ECO:0007669"/>
    <property type="project" value="UniProtKB-UniRule"/>
</dbReference>
<dbReference type="GO" id="GO:0004386">
    <property type="term" value="F:helicase activity"/>
    <property type="evidence" value="ECO:0007669"/>
    <property type="project" value="UniProtKB-KW"/>
</dbReference>
<dbReference type="GO" id="GO:0046872">
    <property type="term" value="F:metal ion binding"/>
    <property type="evidence" value="ECO:0007669"/>
    <property type="project" value="UniProtKB-KW"/>
</dbReference>
<dbReference type="GO" id="GO:0000724">
    <property type="term" value="P:double-strand break repair via homologous recombination"/>
    <property type="evidence" value="ECO:0007669"/>
    <property type="project" value="UniProtKB-UniRule"/>
</dbReference>
<dbReference type="Gene3D" id="3.90.320.10">
    <property type="match status" value="1"/>
</dbReference>
<dbReference type="Gene3D" id="6.10.140.1030">
    <property type="match status" value="1"/>
</dbReference>
<dbReference type="Gene3D" id="3.40.50.300">
    <property type="entry name" value="P-loop containing nucleotide triphosphate hydrolases"/>
    <property type="match status" value="3"/>
</dbReference>
<dbReference type="HAMAP" id="MF_01452">
    <property type="entry name" value="AddB_type1"/>
    <property type="match status" value="1"/>
</dbReference>
<dbReference type="InterPro" id="IPR049035">
    <property type="entry name" value="ADDB_N"/>
</dbReference>
<dbReference type="InterPro" id="IPR014140">
    <property type="entry name" value="DNA_helicase_suAddB"/>
</dbReference>
<dbReference type="InterPro" id="IPR014017">
    <property type="entry name" value="DNA_helicase_UvrD-like_C"/>
</dbReference>
<dbReference type="InterPro" id="IPR027417">
    <property type="entry name" value="P-loop_NTPase"/>
</dbReference>
<dbReference type="InterPro" id="IPR011604">
    <property type="entry name" value="PDDEXK-like_dom_sf"/>
</dbReference>
<dbReference type="InterPro" id="IPR038726">
    <property type="entry name" value="PDDEXK_AddAB-type"/>
</dbReference>
<dbReference type="NCBIfam" id="TIGR02773">
    <property type="entry name" value="addB_Gpos"/>
    <property type="match status" value="1"/>
</dbReference>
<dbReference type="PANTHER" id="PTHR30591">
    <property type="entry name" value="RECBCD ENZYME SUBUNIT RECC"/>
    <property type="match status" value="1"/>
</dbReference>
<dbReference type="PANTHER" id="PTHR30591:SF1">
    <property type="entry name" value="RECBCD ENZYME SUBUNIT RECC"/>
    <property type="match status" value="1"/>
</dbReference>
<dbReference type="Pfam" id="PF21445">
    <property type="entry name" value="ADDB_N"/>
    <property type="match status" value="1"/>
</dbReference>
<dbReference type="Pfam" id="PF12705">
    <property type="entry name" value="PDDEXK_1"/>
    <property type="match status" value="1"/>
</dbReference>
<dbReference type="Pfam" id="PF13361">
    <property type="entry name" value="UvrD_C"/>
    <property type="match status" value="1"/>
</dbReference>
<dbReference type="SUPFAM" id="SSF52540">
    <property type="entry name" value="P-loop containing nucleoside triphosphate hydrolases"/>
    <property type="match status" value="2"/>
</dbReference>
<name>ADDB_CLOAB</name>
<sequence length="1153" mass="133688">MSLRFIYGRAGSGKSQFCIESINTRIEKGGDKPLILIVPEQFSFQSEKNILDLIGEKSINRVKVISFKRLAYRIFDEVGGIAREHMNSSGKSMLFYHIMNTLKSEFRVFALSARQKGFVNTIADTVSEFKKYELTTEVLRDTIDEIEDEELKNKLHDLSLIYDEFNRLLYKNYIDPDDDLTILKDKIKQSTVLQGAEIWLDEFSSFIPQQYGIIEELLKKCSRVNITLTMDYDNASKDNDIFSVTQNTEKRLLKLAENNNISIEKPINLNGRPFYRFKNSPELSFLEKNLYSFPYEIYKKGPDKIEIFKTSNLYTEVEKIARNIIEFVREDNVRFSDIAVVTGDLGSYEKTVSVIFKEYRIPFFIDRNKDIEDNTLIILIKSIIDIFVKNWSYETVFRYLKTGFADIEPDEIDILENYVLAAGIKGKKKWTEEEWTYNVYGDALEGDISEESKEKLSKVNEIKNRFLRPILNFRERVLRRNNVAEICRALFEFLYDINVPEAVEKMVNEFRESGRQILANEYSQIWNIIIELMDQLVEVMGNEKVNLEQFSRILFIGIKEHKMGLIPSSLDQVLVGSIDRLKSHAIKILYIIGVNDGVFPSAAMEEGILSDRDREILNSKGVELAKDTKTQAMEQRFLVYTAITNSKEYLFLSYPIADYEGKTLRPSLIVNRVKTLFPKIVEKSDVIKIENDEESMKLISATVPTFNEMISSFRKEIDGEGEVSSIWHDVYRWYSKSDEWTGKCNNMFKAISYTNQVDYISEEKALKLYGGSLKMSVSRLEKYIECPFSYYVQYGLNIKDRKIFSLTPPDLGSFMHKVIDRFCETIKEENIDWNEVNDHICEEKIYKIVDQEIEGRGGSILNSSPRYSYIALRLKRILKRTVRIVAEQFKRGSFKPVGYEVSFENGGSYPPITVGLNDGSEVVLTGRIDRIDMMEKDGSTYIRIVDYKSGNKIFKLSDVYYGFDIQLLLYLNAILENENLDEEDKVLPGAILYFTMDDPIIKGKNNLTDEQIREEIMKSLKMKGLLLSDPDVIKEMDREMEGSSIIIPASIKKDGTLGRSSAATKEQFDILIEHVRNLVVKNCENLLMGDIRIKPYKKGKEKPCDYCMYSSICRFDTMFDGNNYRYVKEKSDEEVWKLIEREMSEEGDERGED</sequence>
<reference key="1">
    <citation type="journal article" date="2001" name="J. Bacteriol.">
        <title>Genome sequence and comparative analysis of the solvent-producing bacterium Clostridium acetobutylicum.</title>
        <authorList>
            <person name="Noelling J."/>
            <person name="Breton G."/>
            <person name="Omelchenko M.V."/>
            <person name="Makarova K.S."/>
            <person name="Zeng Q."/>
            <person name="Gibson R."/>
            <person name="Lee H.M."/>
            <person name="Dubois J."/>
            <person name="Qiu D."/>
            <person name="Hitti J."/>
            <person name="Wolf Y.I."/>
            <person name="Tatusov R.L."/>
            <person name="Sabathe F."/>
            <person name="Doucette-Stamm L.A."/>
            <person name="Soucaille P."/>
            <person name="Daly M.J."/>
            <person name="Bennett G.N."/>
            <person name="Koonin E.V."/>
            <person name="Smith D.R."/>
        </authorList>
    </citation>
    <scope>NUCLEOTIDE SEQUENCE [LARGE SCALE GENOMIC DNA]</scope>
    <source>
        <strain>ATCC 824 / DSM 792 / JCM 1419 / IAM 19013 / LMG 5710 / NBRC 13948 / NRRL B-527 / VKM B-1787 / 2291 / W</strain>
    </source>
</reference>
<gene>
    <name evidence="1" type="primary">addB</name>
    <name type="ordered locus">CA_C2263</name>
</gene>
<organism>
    <name type="scientific">Clostridium acetobutylicum (strain ATCC 824 / DSM 792 / JCM 1419 / IAM 19013 / LMG 5710 / NBRC 13948 / NRRL B-527 / VKM B-1787 / 2291 / W)</name>
    <dbReference type="NCBI Taxonomy" id="272562"/>
    <lineage>
        <taxon>Bacteria</taxon>
        <taxon>Bacillati</taxon>
        <taxon>Bacillota</taxon>
        <taxon>Clostridia</taxon>
        <taxon>Eubacteriales</taxon>
        <taxon>Clostridiaceae</taxon>
        <taxon>Clostridium</taxon>
    </lineage>
</organism>
<protein>
    <recommendedName>
        <fullName evidence="1">ATP-dependent helicase/deoxyribonuclease subunit B</fullName>
        <ecNumber evidence="1">3.1.-.-</ecNumber>
    </recommendedName>
    <alternativeName>
        <fullName evidence="1">ATP-dependent helicase/nuclease subunit AddB</fullName>
    </alternativeName>
</protein>
<proteinExistence type="inferred from homology"/>
<comment type="function">
    <text evidence="1">The heterodimer acts as both an ATP-dependent DNA helicase and an ATP-dependent, dual-direction single-stranded exonuclease. Recognizes the chi site generating a DNA molecule suitable for the initiation of homologous recombination. The AddB subunit has 5' -&gt; 3' nuclease activity but not helicase activity.</text>
</comment>
<comment type="cofactor">
    <cofactor evidence="1">
        <name>Mg(2+)</name>
        <dbReference type="ChEBI" id="CHEBI:18420"/>
    </cofactor>
</comment>
<comment type="cofactor">
    <cofactor evidence="1">
        <name>[4Fe-4S] cluster</name>
        <dbReference type="ChEBI" id="CHEBI:49883"/>
    </cofactor>
    <text evidence="1">Binds 1 [4Fe-4S] cluster.</text>
</comment>
<comment type="subunit">
    <text evidence="1">Heterodimer of AddA and AddB.</text>
</comment>
<comment type="miscellaneous">
    <text evidence="1">Despite having conserved helicase domains, this subunit does not have helicase activity.</text>
</comment>
<comment type="similarity">
    <text evidence="1">Belongs to the helicase family. AddB/RexB type 1 subfamily.</text>
</comment>
<keyword id="KW-0004">4Fe-4S</keyword>
<keyword id="KW-0067">ATP-binding</keyword>
<keyword id="KW-0227">DNA damage</keyword>
<keyword id="KW-0234">DNA repair</keyword>
<keyword id="KW-0238">DNA-binding</keyword>
<keyword id="KW-0269">Exonuclease</keyword>
<keyword id="KW-0347">Helicase</keyword>
<keyword id="KW-0378">Hydrolase</keyword>
<keyword id="KW-0408">Iron</keyword>
<keyword id="KW-0411">Iron-sulfur</keyword>
<keyword id="KW-0479">Metal-binding</keyword>
<keyword id="KW-0540">Nuclease</keyword>
<keyword id="KW-0547">Nucleotide-binding</keyword>
<keyword id="KW-1185">Reference proteome</keyword>
<accession>Q97GV2</accession>
<feature type="chain" id="PRO_0000379167" description="ATP-dependent helicase/deoxyribonuclease subunit B">
    <location>
        <begin position="1"/>
        <end position="1153"/>
    </location>
</feature>
<feature type="binding site" evidence="1">
    <location>
        <begin position="8"/>
        <end position="15"/>
    </location>
    <ligand>
        <name>ATP</name>
        <dbReference type="ChEBI" id="CHEBI:30616"/>
    </ligand>
</feature>
<feature type="binding site" evidence="1">
    <location>
        <position position="786"/>
    </location>
    <ligand>
        <name>[4Fe-4S] cluster</name>
        <dbReference type="ChEBI" id="CHEBI:49883"/>
    </ligand>
</feature>
<feature type="binding site" evidence="1">
    <location>
        <position position="1104"/>
    </location>
    <ligand>
        <name>[4Fe-4S] cluster</name>
        <dbReference type="ChEBI" id="CHEBI:49883"/>
    </ligand>
</feature>
<feature type="binding site" evidence="1">
    <location>
        <position position="1107"/>
    </location>
    <ligand>
        <name>[4Fe-4S] cluster</name>
        <dbReference type="ChEBI" id="CHEBI:49883"/>
    </ligand>
</feature>
<feature type="binding site" evidence="1">
    <location>
        <position position="1113"/>
    </location>
    <ligand>
        <name>[4Fe-4S] cluster</name>
        <dbReference type="ChEBI" id="CHEBI:49883"/>
    </ligand>
</feature>
<evidence type="ECO:0000255" key="1">
    <source>
        <dbReference type="HAMAP-Rule" id="MF_01452"/>
    </source>
</evidence>